<sequence length="38" mass="4191">MSLRPCLTPSSMQYSDIYIPTHSLTSTSTLAVIPYPAF</sequence>
<feature type="chain" id="PRO_0000247780" description="Putative uncharacterized protein YLR466C-B">
    <location>
        <begin position="1"/>
        <end position="38"/>
    </location>
</feature>
<name>YL466_YEAST</name>
<dbReference type="EMBL" id="U22383">
    <property type="status" value="NOT_ANNOTATED_CDS"/>
    <property type="molecule type" value="Genomic_DNA"/>
</dbReference>
<dbReference type="EMBL" id="AF480011">
    <property type="protein sequence ID" value="AAL79324.1"/>
    <property type="molecule type" value="Genomic_DNA"/>
</dbReference>
<dbReference type="STRING" id="4932.YLR466C-B"/>
<dbReference type="PaxDb" id="4932-YLR466C-B"/>
<dbReference type="EnsemblFungi" id="YLR466C-B_mRNA">
    <property type="protein sequence ID" value="YLR466C-B"/>
    <property type="gene ID" value="YLR466C-B"/>
</dbReference>
<dbReference type="AGR" id="SGD:S000028686"/>
<dbReference type="SGD" id="S000028686">
    <property type="gene designation" value="YLR466C-B"/>
</dbReference>
<dbReference type="GeneTree" id="ENSGT00940000182173"/>
<dbReference type="HOGENOM" id="CLU_212309_0_0_1"/>
<evidence type="ECO:0000305" key="1">
    <source>
    </source>
</evidence>
<comment type="caution">
    <text evidence="1">Product of a dubious gene prediction unlikely to encode a functional protein. Because of that it is not part of the S.cerevisiae S288c complete/reference proteome set.</text>
</comment>
<reference key="1">
    <citation type="journal article" date="1997" name="Nature">
        <title>The nucleotide sequence of Saccharomyces cerevisiae chromosome XII.</title>
        <authorList>
            <person name="Johnston M."/>
            <person name="Hillier L.W."/>
            <person name="Riles L."/>
            <person name="Albermann K."/>
            <person name="Andre B."/>
            <person name="Ansorge W."/>
            <person name="Benes V."/>
            <person name="Brueckner M."/>
            <person name="Delius H."/>
            <person name="Dubois E."/>
            <person name="Duesterhoeft A."/>
            <person name="Entian K.-D."/>
            <person name="Floeth M."/>
            <person name="Goffeau A."/>
            <person name="Hebling U."/>
            <person name="Heumann K."/>
            <person name="Heuss-Neitzel D."/>
            <person name="Hilbert H."/>
            <person name="Hilger F."/>
            <person name="Kleine K."/>
            <person name="Koetter P."/>
            <person name="Louis E.J."/>
            <person name="Messenguy F."/>
            <person name="Mewes H.-W."/>
            <person name="Miosga T."/>
            <person name="Moestl D."/>
            <person name="Mueller-Auer S."/>
            <person name="Nentwich U."/>
            <person name="Obermaier B."/>
            <person name="Piravandi E."/>
            <person name="Pohl T.M."/>
            <person name="Portetelle D."/>
            <person name="Purnelle B."/>
            <person name="Rechmann S."/>
            <person name="Rieger M."/>
            <person name="Rinke M."/>
            <person name="Rose M."/>
            <person name="Scharfe M."/>
            <person name="Scherens B."/>
            <person name="Scholler P."/>
            <person name="Schwager C."/>
            <person name="Schwarz S."/>
            <person name="Underwood A.P."/>
            <person name="Urrestarazu L.A."/>
            <person name="Vandenbol M."/>
            <person name="Verhasselt P."/>
            <person name="Vierendeels F."/>
            <person name="Voet M."/>
            <person name="Volckaert G."/>
            <person name="Voss H."/>
            <person name="Wambutt R."/>
            <person name="Wedler E."/>
            <person name="Wedler H."/>
            <person name="Zimmermann F.K."/>
            <person name="Zollner A."/>
            <person name="Hani J."/>
            <person name="Hoheisel J.D."/>
        </authorList>
    </citation>
    <scope>NUCLEOTIDE SEQUENCE [LARGE SCALE GENOMIC DNA]</scope>
    <source>
        <strain>ATCC 204508 / S288c</strain>
    </source>
</reference>
<reference key="2">
    <citation type="journal article" date="2014" name="G3 (Bethesda)">
        <title>The reference genome sequence of Saccharomyces cerevisiae: Then and now.</title>
        <authorList>
            <person name="Engel S.R."/>
            <person name="Dietrich F.S."/>
            <person name="Fisk D.G."/>
            <person name="Binkley G."/>
            <person name="Balakrishnan R."/>
            <person name="Costanzo M.C."/>
            <person name="Dwight S.S."/>
            <person name="Hitz B.C."/>
            <person name="Karra K."/>
            <person name="Nash R.S."/>
            <person name="Weng S."/>
            <person name="Wong E.D."/>
            <person name="Lloyd P."/>
            <person name="Skrzypek M.S."/>
            <person name="Miyasato S.R."/>
            <person name="Simison M."/>
            <person name="Cherry J.M."/>
        </authorList>
    </citation>
    <scope>GENOME REANNOTATION</scope>
    <source>
        <strain>ATCC 204508 / S288c</strain>
    </source>
</reference>
<reference key="3">
    <citation type="journal article" date="2002" name="Nat. Biotechnol.">
        <title>An integrated approach for finding overlooked genes in yeast.</title>
        <authorList>
            <person name="Kumar A."/>
            <person name="Harrison P.M."/>
            <person name="Cheung K.-H."/>
            <person name="Lan N."/>
            <person name="Echols N."/>
            <person name="Bertone P."/>
            <person name="Miller P."/>
            <person name="Gerstein M.B."/>
            <person name="Snyder M."/>
        </authorList>
    </citation>
    <scope>NUCLEOTIDE SEQUENCE [GENOMIC DNA]</scope>
</reference>
<gene>
    <name type="ordered locus">YLR466C-B</name>
</gene>
<proteinExistence type="uncertain"/>
<accession>Q8TGJ4</accession>
<accession>D6VZ98</accession>
<protein>
    <recommendedName>
        <fullName>Putative uncharacterized protein YLR466C-B</fullName>
    </recommendedName>
</protein>
<organism>
    <name type="scientific">Saccharomyces cerevisiae (strain ATCC 204508 / S288c)</name>
    <name type="common">Baker's yeast</name>
    <dbReference type="NCBI Taxonomy" id="559292"/>
    <lineage>
        <taxon>Eukaryota</taxon>
        <taxon>Fungi</taxon>
        <taxon>Dikarya</taxon>
        <taxon>Ascomycota</taxon>
        <taxon>Saccharomycotina</taxon>
        <taxon>Saccharomycetes</taxon>
        <taxon>Saccharomycetales</taxon>
        <taxon>Saccharomycetaceae</taxon>
        <taxon>Saccharomyces</taxon>
    </lineage>
</organism>